<dbReference type="EMBL" id="M28312">
    <property type="protein sequence ID" value="AAB42179.1"/>
    <property type="molecule type" value="Genomic_DNA"/>
</dbReference>
<dbReference type="EMBL" id="M28308">
    <property type="protein sequence ID" value="AAB42179.1"/>
    <property type="status" value="JOINED"/>
    <property type="molecule type" value="Genomic_DNA"/>
</dbReference>
<dbReference type="EMBL" id="M28309">
    <property type="protein sequence ID" value="AAB42179.1"/>
    <property type="status" value="JOINED"/>
    <property type="molecule type" value="Genomic_DNA"/>
</dbReference>
<dbReference type="EMBL" id="M28310">
    <property type="protein sequence ID" value="AAB42179.1"/>
    <property type="status" value="JOINED"/>
    <property type="molecule type" value="Genomic_DNA"/>
</dbReference>
<dbReference type="EMBL" id="M28311">
    <property type="protein sequence ID" value="AAB42179.1"/>
    <property type="status" value="JOINED"/>
    <property type="molecule type" value="Genomic_DNA"/>
</dbReference>
<dbReference type="EMBL" id="X04684">
    <property type="protein sequence ID" value="CAA28387.1"/>
    <property type="molecule type" value="mRNA"/>
</dbReference>
<dbReference type="EMBL" id="M17243">
    <property type="protein sequence ID" value="AAA40471.1"/>
    <property type="molecule type" value="mRNA"/>
</dbReference>
<dbReference type="EMBL" id="BC008107">
    <property type="protein sequence ID" value="AAH08107.1"/>
    <property type="molecule type" value="mRNA"/>
</dbReference>
<dbReference type="EMBL" id="BC034260">
    <property type="protein sequence ID" value="AAH34260.1"/>
    <property type="molecule type" value="mRNA"/>
</dbReference>
<dbReference type="EMBL" id="BC051260">
    <property type="protein sequence ID" value="AAH51260.1"/>
    <property type="molecule type" value="mRNA"/>
</dbReference>
<dbReference type="EMBL" id="V00755">
    <property type="protein sequence ID" value="CAA24132.1"/>
    <property type="molecule type" value="mRNA"/>
</dbReference>
<dbReference type="CCDS" id="CCDS30046.1"/>
<dbReference type="PIR" id="A26917">
    <property type="entry name" value="A26106"/>
</dbReference>
<dbReference type="RefSeq" id="NP_001037849.1">
    <property type="nucleotide sequence ID" value="NM_001044384.2"/>
</dbReference>
<dbReference type="RefSeq" id="NP_035723.2">
    <property type="nucleotide sequence ID" value="NM_011593.3"/>
</dbReference>
<dbReference type="SMR" id="P12032"/>
<dbReference type="FunCoup" id="P12032">
    <property type="interactions" value="246"/>
</dbReference>
<dbReference type="STRING" id="10090.ENSMUSP00000110999"/>
<dbReference type="GlyCosmos" id="P12032">
    <property type="glycosylation" value="2 sites, No reported glycans"/>
</dbReference>
<dbReference type="GlyGen" id="P12032">
    <property type="glycosylation" value="2 sites, 1 N-linked glycan (1 site)"/>
</dbReference>
<dbReference type="PhosphoSitePlus" id="P12032"/>
<dbReference type="CPTAC" id="non-CPTAC-3503"/>
<dbReference type="jPOST" id="P12032"/>
<dbReference type="PaxDb" id="10090-ENSMUSP00000009530"/>
<dbReference type="PeptideAtlas" id="P12032"/>
<dbReference type="ProteomicsDB" id="259395"/>
<dbReference type="Pumba" id="P12032"/>
<dbReference type="Antibodypedia" id="11411">
    <property type="antibodies" value="1163 antibodies from 50 providers"/>
</dbReference>
<dbReference type="DNASU" id="21857"/>
<dbReference type="Ensembl" id="ENSMUST00000009530.5">
    <property type="protein sequence ID" value="ENSMUSP00000009530.5"/>
    <property type="gene ID" value="ENSMUSG00000001131.12"/>
</dbReference>
<dbReference type="Ensembl" id="ENSMUST00000115342.10">
    <property type="protein sequence ID" value="ENSMUSP00000110999.4"/>
    <property type="gene ID" value="ENSMUSG00000001131.12"/>
</dbReference>
<dbReference type="GeneID" id="21857"/>
<dbReference type="KEGG" id="mmu:21857"/>
<dbReference type="UCSC" id="uc009sty.1">
    <property type="organism name" value="mouse"/>
</dbReference>
<dbReference type="AGR" id="MGI:98752"/>
<dbReference type="CTD" id="7076"/>
<dbReference type="MGI" id="MGI:98752">
    <property type="gene designation" value="Timp1"/>
</dbReference>
<dbReference type="VEuPathDB" id="HostDB:ENSMUSG00000001131"/>
<dbReference type="eggNOG" id="KOG4745">
    <property type="taxonomic scope" value="Eukaryota"/>
</dbReference>
<dbReference type="GeneTree" id="ENSGT00940000161081"/>
<dbReference type="HOGENOM" id="CLU_084029_0_0_1"/>
<dbReference type="InParanoid" id="P12032"/>
<dbReference type="OMA" id="LWTDQFL"/>
<dbReference type="OrthoDB" id="6041373at2759"/>
<dbReference type="PhylomeDB" id="P12032"/>
<dbReference type="TreeFam" id="TF317409"/>
<dbReference type="Reactome" id="R-MMU-114608">
    <property type="pathway name" value="Platelet degranulation"/>
</dbReference>
<dbReference type="Reactome" id="R-MMU-1592389">
    <property type="pathway name" value="Activation of Matrix Metalloproteinases"/>
</dbReference>
<dbReference type="Reactome" id="R-MMU-381426">
    <property type="pathway name" value="Regulation of Insulin-like Growth Factor (IGF) transport and uptake by Insulin-like Growth Factor Binding Proteins (IGFBPs)"/>
</dbReference>
<dbReference type="Reactome" id="R-MMU-8957275">
    <property type="pathway name" value="Post-translational protein phosphorylation"/>
</dbReference>
<dbReference type="Reactome" id="R-MMU-9839383">
    <property type="pathway name" value="TGFBR3 PTM regulation"/>
</dbReference>
<dbReference type="BioGRID-ORCS" id="21857">
    <property type="hits" value="3 hits in 77 CRISPR screens"/>
</dbReference>
<dbReference type="PRO" id="PR:P12032"/>
<dbReference type="Proteomes" id="UP000000589">
    <property type="component" value="Chromosome X"/>
</dbReference>
<dbReference type="RNAct" id="P12032">
    <property type="molecule type" value="protein"/>
</dbReference>
<dbReference type="Bgee" id="ENSMUSG00000001131">
    <property type="expression patterns" value="Expressed in vault of skull and 204 other cell types or tissues"/>
</dbReference>
<dbReference type="GO" id="GO:0005604">
    <property type="term" value="C:basement membrane"/>
    <property type="evidence" value="ECO:0000314"/>
    <property type="project" value="MGI"/>
</dbReference>
<dbReference type="GO" id="GO:0031012">
    <property type="term" value="C:extracellular matrix"/>
    <property type="evidence" value="ECO:0000314"/>
    <property type="project" value="MGI"/>
</dbReference>
<dbReference type="GO" id="GO:0005615">
    <property type="term" value="C:extracellular space"/>
    <property type="evidence" value="ECO:0007005"/>
    <property type="project" value="BHF-UCL"/>
</dbReference>
<dbReference type="GO" id="GO:0005125">
    <property type="term" value="F:cytokine activity"/>
    <property type="evidence" value="ECO:0000250"/>
    <property type="project" value="UniProtKB"/>
</dbReference>
<dbReference type="GO" id="GO:0008083">
    <property type="term" value="F:growth factor activity"/>
    <property type="evidence" value="ECO:0007669"/>
    <property type="project" value="UniProtKB-KW"/>
</dbReference>
<dbReference type="GO" id="GO:0008191">
    <property type="term" value="F:metalloendopeptidase inhibitor activity"/>
    <property type="evidence" value="ECO:0000250"/>
    <property type="project" value="UniProtKB"/>
</dbReference>
<dbReference type="GO" id="GO:0002020">
    <property type="term" value="F:protease binding"/>
    <property type="evidence" value="ECO:0007669"/>
    <property type="project" value="Ensembl"/>
</dbReference>
<dbReference type="GO" id="GO:0008270">
    <property type="term" value="F:zinc ion binding"/>
    <property type="evidence" value="ECO:0007669"/>
    <property type="project" value="Ensembl"/>
</dbReference>
<dbReference type="GO" id="GO:0051216">
    <property type="term" value="P:cartilage development"/>
    <property type="evidence" value="ECO:0007669"/>
    <property type="project" value="Ensembl"/>
</dbReference>
<dbReference type="GO" id="GO:1901653">
    <property type="term" value="P:cellular response to peptide"/>
    <property type="evidence" value="ECO:0007669"/>
    <property type="project" value="Ensembl"/>
</dbReference>
<dbReference type="GO" id="GO:0071492">
    <property type="term" value="P:cellular response to UV-A"/>
    <property type="evidence" value="ECO:0000250"/>
    <property type="project" value="UniProtKB"/>
</dbReference>
<dbReference type="GO" id="GO:0002248">
    <property type="term" value="P:connective tissue replacement involved in inflammatory response wound healing"/>
    <property type="evidence" value="ECO:0000314"/>
    <property type="project" value="MGI"/>
</dbReference>
<dbReference type="GO" id="GO:0043066">
    <property type="term" value="P:negative regulation of apoptotic process"/>
    <property type="evidence" value="ECO:0007669"/>
    <property type="project" value="Ensembl"/>
</dbReference>
<dbReference type="GO" id="GO:0043086">
    <property type="term" value="P:negative regulation of catalytic activity"/>
    <property type="evidence" value="ECO:0000250"/>
    <property type="project" value="UniProtKB"/>
</dbReference>
<dbReference type="GO" id="GO:0010951">
    <property type="term" value="P:negative regulation of endopeptidase activity"/>
    <property type="evidence" value="ECO:0000250"/>
    <property type="project" value="UniProtKB"/>
</dbReference>
<dbReference type="GO" id="GO:0051045">
    <property type="term" value="P:negative regulation of membrane protein ectodomain proteolysis"/>
    <property type="evidence" value="ECO:0007669"/>
    <property type="project" value="Ensembl"/>
</dbReference>
<dbReference type="GO" id="GO:1901164">
    <property type="term" value="P:negative regulation of trophoblast cell migration"/>
    <property type="evidence" value="ECO:0007669"/>
    <property type="project" value="Ensembl"/>
</dbReference>
<dbReference type="GO" id="GO:0008284">
    <property type="term" value="P:positive regulation of cell population proliferation"/>
    <property type="evidence" value="ECO:0000250"/>
    <property type="project" value="UniProtKB"/>
</dbReference>
<dbReference type="GO" id="GO:2001044">
    <property type="term" value="P:regulation of integrin-mediated signaling pathway"/>
    <property type="evidence" value="ECO:0000250"/>
    <property type="project" value="UniProtKB"/>
</dbReference>
<dbReference type="GO" id="GO:0034097">
    <property type="term" value="P:response to cytokine"/>
    <property type="evidence" value="ECO:0007669"/>
    <property type="project" value="Ensembl"/>
</dbReference>
<dbReference type="GO" id="GO:0043434">
    <property type="term" value="P:response to peptide hormone"/>
    <property type="evidence" value="ECO:0007669"/>
    <property type="project" value="Ensembl"/>
</dbReference>
<dbReference type="FunFam" id="2.40.50.120:FF:000016">
    <property type="entry name" value="Metalloproteinase inhibitor 1"/>
    <property type="match status" value="1"/>
</dbReference>
<dbReference type="FunFam" id="3.90.370.10:FF:000001">
    <property type="entry name" value="Metalloproteinase inhibitor 3"/>
    <property type="match status" value="1"/>
</dbReference>
<dbReference type="Gene3D" id="2.40.50.120">
    <property type="match status" value="1"/>
</dbReference>
<dbReference type="Gene3D" id="3.90.370.10">
    <property type="entry name" value="Tissue inhibitor of metalloproteinase-1. Chain B, domain 1"/>
    <property type="match status" value="1"/>
</dbReference>
<dbReference type="InterPro" id="IPR001134">
    <property type="entry name" value="Netrin_domain"/>
</dbReference>
<dbReference type="InterPro" id="IPR001820">
    <property type="entry name" value="TIMP"/>
</dbReference>
<dbReference type="InterPro" id="IPR008993">
    <property type="entry name" value="TIMP-like_OB-fold"/>
</dbReference>
<dbReference type="InterPro" id="IPR027465">
    <property type="entry name" value="TIMP_C"/>
</dbReference>
<dbReference type="InterPro" id="IPR030490">
    <property type="entry name" value="TIMP_CS"/>
</dbReference>
<dbReference type="PANTHER" id="PTHR11844">
    <property type="entry name" value="METALLOPROTEASE INHIBITOR"/>
    <property type="match status" value="1"/>
</dbReference>
<dbReference type="PANTHER" id="PTHR11844:SF20">
    <property type="entry name" value="METALLOPROTEINASE INHIBITOR 1"/>
    <property type="match status" value="1"/>
</dbReference>
<dbReference type="Pfam" id="PF00965">
    <property type="entry name" value="TIMP"/>
    <property type="match status" value="1"/>
</dbReference>
<dbReference type="SMART" id="SM00206">
    <property type="entry name" value="NTR"/>
    <property type="match status" value="1"/>
</dbReference>
<dbReference type="SUPFAM" id="SSF50242">
    <property type="entry name" value="TIMP-like"/>
    <property type="match status" value="1"/>
</dbReference>
<dbReference type="PROSITE" id="PS50189">
    <property type="entry name" value="NTR"/>
    <property type="match status" value="1"/>
</dbReference>
<dbReference type="PROSITE" id="PS00288">
    <property type="entry name" value="TIMP"/>
    <property type="match status" value="1"/>
</dbReference>
<name>TIMP1_MOUSE</name>
<sequence length="205" mass="22628">MMAPFASLASGILLLLSLIASSKACSCAPPHPQTAFCNSDLVIRAKFMGSPEINETTLYQRYKIKMTKMLKGFKAVGNAADIRYAYTPVMESLCGYAHKSQNRSEEFLITGRLRNGNLHISACSFLVPWRTLSPAQQRAFSKTYSAGCGVCTVFPCLSIPCKLESDTHCLWTDQVLVGSEDYQSRHFACLPRNPGLCTWRSLGAR</sequence>
<organism>
    <name type="scientific">Mus musculus</name>
    <name type="common">Mouse</name>
    <dbReference type="NCBI Taxonomy" id="10090"/>
    <lineage>
        <taxon>Eukaryota</taxon>
        <taxon>Metazoa</taxon>
        <taxon>Chordata</taxon>
        <taxon>Craniata</taxon>
        <taxon>Vertebrata</taxon>
        <taxon>Euteleostomi</taxon>
        <taxon>Mammalia</taxon>
        <taxon>Eutheria</taxon>
        <taxon>Euarchontoglires</taxon>
        <taxon>Glires</taxon>
        <taxon>Rodentia</taxon>
        <taxon>Myomorpha</taxon>
        <taxon>Muroidea</taxon>
        <taxon>Muridae</taxon>
        <taxon>Murinae</taxon>
        <taxon>Mus</taxon>
        <taxon>Mus</taxon>
    </lineage>
</organism>
<comment type="function">
    <text evidence="1 6">Metalloproteinase inhibitor that functions by forming one to one complexes with target metalloproteinases, such as collagenases, and irreversibly inactivates them by binding to their catalytic zinc cofactor. Acts on MMP1, MMP2, MMP3, MMP7, MMP8, MMP9, MMP10, MMP11, MMP12, MMP13 and MMP16. Does not act on MMP14 (By similarity). Also functions as a growth factor that regulates cell differentiation, migration and cell death and activates cellular signaling cascades via CD63 and ITGB1. Plays a role in integrin signaling.</text>
</comment>
<comment type="subunit">
    <text evidence="1 6">Interacts with MMP1, MMP3, MMP10 and MMP13, but has only very low affinity for MMP14 (By similarity). Interacts with CD63; identified in a complex with CD63 and ITGB1.</text>
</comment>
<comment type="subcellular location">
    <subcellularLocation>
        <location evidence="6">Secreted</location>
    </subcellularLocation>
</comment>
<comment type="tissue specificity">
    <text>Found in fetal and adult tissues. Highest levels are found in bone. Also found in lung, ovary and uterus.</text>
</comment>
<comment type="developmental stage">
    <text evidence="7">Present in unfertilized eggs and at the zygote and cleavage stages. Levels increase at the blastocyst stage and with endoderm differentiation.</text>
</comment>
<comment type="induction">
    <text>Regulated by tumor promoters and mitogens through protein kinase C. Also induced by viruses.</text>
</comment>
<comment type="PTM">
    <text evidence="1">The activity of TIMP1 is dependent on the presence of disulfide bonds.</text>
</comment>
<comment type="PTM">
    <text evidence="1">N-glycosylated.</text>
</comment>
<comment type="similarity">
    <text evidence="8">Belongs to the protease inhibitor I35 (TIMP) family.</text>
</comment>
<gene>
    <name type="primary">Timp1</name>
    <name type="synonym">Timp</name>
    <name type="synonym">Timp-1</name>
</gene>
<accession>P12032</accession>
<accession>P20064</accession>
<accession>Q61720</accession>
<protein>
    <recommendedName>
        <fullName>Metalloproteinase inhibitor 1</fullName>
    </recommendedName>
    <alternativeName>
        <fullName>Collagenase inhibitor 16C8 fibroblast</fullName>
    </alternativeName>
    <alternativeName>
        <fullName>Erythroid-potentiating activity</fullName>
        <shortName>EPA</shortName>
    </alternativeName>
    <alternativeName>
        <fullName>TPA-S1</fullName>
    </alternativeName>
    <alternativeName>
        <fullName>TPA-induced protein</fullName>
    </alternativeName>
    <alternativeName>
        <fullName>Tissue inhibitor of metalloproteinases 1</fullName>
        <shortName>TIMP-1</shortName>
    </alternativeName>
</protein>
<keyword id="KW-1015">Disulfide bond</keyword>
<keyword id="KW-0325">Glycoprotein</keyword>
<keyword id="KW-0339">Growth factor</keyword>
<keyword id="KW-0479">Metal-binding</keyword>
<keyword id="KW-0481">Metalloenzyme inhibitor</keyword>
<keyword id="KW-0483">Metalloprotease inhibitor</keyword>
<keyword id="KW-0597">Phosphoprotein</keyword>
<keyword id="KW-0646">Protease inhibitor</keyword>
<keyword id="KW-1185">Reference proteome</keyword>
<keyword id="KW-0964">Secreted</keyword>
<keyword id="KW-0732">Signal</keyword>
<keyword id="KW-0862">Zinc</keyword>
<reference key="1">
    <citation type="journal article" date="1987" name="EMBO J.">
        <title>Characterization and expression of a murine gene homologous to human EPA/TIMP: a virus-induced gene in the mouse.</title>
        <authorList>
            <person name="Gewert D.R."/>
            <person name="Coulombe B."/>
            <person name="Castelino M."/>
            <person name="Skup D."/>
            <person name="Williams B.R.G."/>
        </authorList>
    </citation>
    <scope>NUCLEOTIDE SEQUENCE [GENOMIC DNA]</scope>
</reference>
<reference key="2">
    <citation type="journal article" date="1986" name="Nucleic Acids Res.">
        <title>A growth-responsive gene (16C8) in normal mouse fibroblasts homologous to a human collagenase inhibitor with erythroid-potentiating activity: evidence for inducible and constitutive transcripts.</title>
        <authorList>
            <person name="Edwards D.R."/>
            <person name="Waterhouse P."/>
            <person name="Holman M.L."/>
            <person name="Denhardt D.T."/>
        </authorList>
    </citation>
    <scope>NUCLEOTIDE SEQUENCE [MRNA]</scope>
    <source>
        <tissue>Fibroblast</tissue>
    </source>
</reference>
<reference key="3">
    <citation type="journal article" date="1987" name="Mol. Cell. Biol.">
        <title>Molecular cloning of gene sequences regulated by tumor promoters and mitogens through protein kinase C.</title>
        <authorList>
            <person name="Johnson M.D."/>
            <person name="Housey G.M."/>
            <person name="Kirschmeier P.T."/>
            <person name="Weinstein I.B."/>
        </authorList>
    </citation>
    <scope>NUCLEOTIDE SEQUENCE [MRNA]</scope>
    <source>
        <strain>C3H/HeJ</strain>
    </source>
</reference>
<reference key="4">
    <citation type="journal article" date="2004" name="Genome Res.">
        <title>The status, quality, and expansion of the NIH full-length cDNA project: the Mammalian Gene Collection (MGC).</title>
        <authorList>
            <consortium name="The MGC Project Team"/>
        </authorList>
    </citation>
    <scope>NUCLEOTIDE SEQUENCE [LARGE SCALE MRNA]</scope>
    <source>
        <strain>FVB/N</strain>
        <tissue>Mammary gland</tissue>
        <tissue>Osteoblast</tissue>
    </source>
</reference>
<reference key="5">
    <citation type="journal article" date="1989" name="Genes Dev.">
        <title>Genes for extracellular-matrix-degrading metalloproteinases and their inhibitor, TIMP, are expressed during early mammalian development.</title>
        <authorList>
            <person name="Brenner C.A."/>
            <person name="Adler R.R."/>
            <person name="Rappolee D.A."/>
            <person name="Pedersen R.A."/>
            <person name="Werb Z."/>
        </authorList>
    </citation>
    <scope>PARTIAL NUCLEOTIDE SEQUENCE</scope>
    <scope>DEVELOPMENTAL STAGE</scope>
    <source>
        <tissue>Embryo</tissue>
    </source>
</reference>
<reference key="6">
    <citation type="journal article" date="1982" name="Nucleic Acids Res.">
        <title>Molecular cloning of partial cDNA copies of two distinct mouse IFN-beta mRNAs.</title>
        <authorList>
            <person name="Skup D."/>
            <person name="Windass J.D."/>
            <person name="Sor F.S."/>
            <person name="George H."/>
            <person name="Williams B.R."/>
            <person name="Fukuhara H."/>
            <person name="de Maeyer-Guignard J."/>
            <person name="de Maeyer E."/>
        </authorList>
    </citation>
    <scope>NUCLEOTIDE SEQUENCE OF 168-205</scope>
</reference>
<reference key="7">
    <citation type="journal article" date="2013" name="Mol. Cancer">
        <title>Timp1 interacts with beta-1 integrin and CD63 along melanoma genesis and confers anoikis resistance by activating PI3-K signaling pathway independently of Akt phosphorylation.</title>
        <authorList>
            <person name="Toricelli M."/>
            <person name="Melo F.H."/>
            <person name="Peres G.B."/>
            <person name="Silva D.C."/>
            <person name="Jasiulionis M.G."/>
        </authorList>
    </citation>
    <scope>FUNCTION</scope>
    <scope>SUBCELLULAR LOCATION</scope>
    <scope>INTERACTION WITH CD63</scope>
    <scope>IDENTIFICATION IN A COMPLEX WITH CD63 AND ITGB1</scope>
</reference>
<proteinExistence type="evidence at protein level"/>
<evidence type="ECO:0000250" key="1"/>
<evidence type="ECO:0000250" key="2">
    <source>
        <dbReference type="UniProtKB" id="P01033"/>
    </source>
</evidence>
<evidence type="ECO:0000250" key="3">
    <source>
        <dbReference type="UniProtKB" id="P16035"/>
    </source>
</evidence>
<evidence type="ECO:0000255" key="4"/>
<evidence type="ECO:0000255" key="5">
    <source>
        <dbReference type="PROSITE-ProRule" id="PRU00295"/>
    </source>
</evidence>
<evidence type="ECO:0000269" key="6">
    <source>
    </source>
</evidence>
<evidence type="ECO:0000269" key="7">
    <source>
    </source>
</evidence>
<evidence type="ECO:0000305" key="8"/>
<feature type="signal peptide">
    <location>
        <begin position="1"/>
        <end position="24"/>
    </location>
</feature>
<feature type="chain" id="PRO_0000034325" description="Metalloproteinase inhibitor 1">
    <location>
        <begin position="25"/>
        <end position="205"/>
    </location>
</feature>
<feature type="domain" description="NTR" evidence="5">
    <location>
        <begin position="25"/>
        <end position="148"/>
    </location>
</feature>
<feature type="region of interest" description="Involved in metalloproteinase-binding" evidence="3">
    <location>
        <begin position="25"/>
        <end position="28"/>
    </location>
</feature>
<feature type="region of interest" description="Involved in metalloproteinase-binding" evidence="3">
    <location>
        <begin position="91"/>
        <end position="92"/>
    </location>
</feature>
<feature type="binding site" evidence="3">
    <location>
        <position position="25"/>
    </location>
    <ligand>
        <name>Zn(2+)</name>
        <dbReference type="ChEBI" id="CHEBI:29105"/>
        <note>ligand shared with metalloproteinase partner</note>
    </ligand>
</feature>
<feature type="site" description="Involved in metalloproteinase-binding" evidence="3">
    <location>
        <position position="38"/>
    </location>
</feature>
<feature type="modified residue" description="Phosphoserine" evidence="2">
    <location>
        <position position="179"/>
    </location>
</feature>
<feature type="glycosylation site" description="N-linked (GlcNAc...) asparagine" evidence="4">
    <location>
        <position position="54"/>
    </location>
</feature>
<feature type="glycosylation site" description="N-linked (GlcNAc...) asparagine" evidence="4">
    <location>
        <position position="102"/>
    </location>
</feature>
<feature type="disulfide bond" evidence="5">
    <location>
        <begin position="25"/>
        <end position="94"/>
    </location>
</feature>
<feature type="disulfide bond" evidence="5">
    <location>
        <begin position="27"/>
        <end position="123"/>
    </location>
</feature>
<feature type="disulfide bond" evidence="5">
    <location>
        <begin position="37"/>
        <end position="148"/>
    </location>
</feature>
<feature type="disulfide bond" evidence="5">
    <location>
        <begin position="151"/>
        <end position="197"/>
    </location>
</feature>
<feature type="disulfide bond" evidence="5">
    <location>
        <begin position="156"/>
        <end position="161"/>
    </location>
</feature>
<feature type="disulfide bond" evidence="5">
    <location>
        <begin position="169"/>
        <end position="189"/>
    </location>
</feature>
<feature type="sequence conflict" description="In Ref. 1; AAB42179." evidence="8" ref="1">
    <original>E</original>
    <variation>R</variation>
    <location>
        <position position="52"/>
    </location>
</feature>
<feature type="sequence conflict" description="In Ref. 1; AAB42179." evidence="8" ref="1">
    <original>M</original>
    <variation>MM</variation>
    <location>
        <position position="66"/>
    </location>
</feature>
<feature type="sequence conflict" description="In Ref. 1; AAB42179." evidence="8" ref="1">
    <original>NL</original>
    <variation>KF</variation>
    <location>
        <begin position="117"/>
        <end position="118"/>
    </location>
</feature>
<feature type="sequence conflict" description="In Ref. 1; AAB42179." evidence="8" ref="1">
    <original>S</original>
    <variation>N</variation>
    <location>
        <position position="121"/>
    </location>
</feature>
<feature type="sequence conflict" description="In Ref. 1." evidence="8" ref="1">
    <original>A</original>
    <variation>V</variation>
    <location>
        <position position="139"/>
    </location>
</feature>
<feature type="sequence conflict" description="In Ref. 1." evidence="8" ref="1">
    <original>T</original>
    <variation>KN</variation>
    <location>
        <position position="143"/>
    </location>
</feature>
<feature type="sequence conflict" description="In Ref. 1 and 6." evidence="8" ref="1 6">
    <original>P</original>
    <variation>L</variation>
    <location>
        <position position="194"/>
    </location>
</feature>